<sequence>DFGHSKKIRKNVHSLTAEEQNSLRRAMDDLQDDKTRGGFQQIAAFHGEPKWCPRPEAEKKFACCVHGMAVFPHWHRLLTVQGENALRKHGFTGGLPYWDWTRPMSALPHFVADPTYDDSVSSLEEDNPYSHGHIDSVGHDTTRAVRDDLYQSPGFGHYTDIAKQVLLALEQDDFCDFEVQFEIAHNSIHALVGGNEPYGMSTLEYFLYDPIFFLHHSNTDRLWAIWQALQKYRGKPYNTANCAIVRHDTYRKPLQPFGLDSVINPDDETREHSVPRDVFNYKDDFNYEYESLNFNGLSIAQLDRELQRIKSHDRVFAGFLLHEIGQSALVKFYVCKHHVSDCDHYAGEFYILGDEAEMPFAYDRVYKYEISQALHDLDLHVGDNFHLKYEAFNLNGGSLGGVDLSQPSVIFEPAAGSHTA</sequence>
<proteinExistence type="evidence at protein level"/>
<keyword id="KW-0186">Copper</keyword>
<keyword id="KW-0903">Direct protein sequencing</keyword>
<keyword id="KW-1015">Disulfide bond</keyword>
<keyword id="KW-0325">Glycoprotein</keyword>
<keyword id="KW-0479">Metal-binding</keyword>
<keyword id="KW-0561">Oxygen transport</keyword>
<keyword id="KW-0964">Secreted</keyword>
<keyword id="KW-0813">Transport</keyword>
<evidence type="ECO:0000250" key="1"/>
<evidence type="ECO:0000256" key="2">
    <source>
        <dbReference type="SAM" id="MobiDB-lite"/>
    </source>
</evidence>
<evidence type="ECO:0000269" key="3">
    <source>
    </source>
</evidence>
<feature type="chain" id="PRO_0000204289" description="Hemocyanin 2-c chain">
    <location>
        <begin position="1"/>
        <end position="420"/>
    </location>
</feature>
<feature type="region of interest" description="Disordered" evidence="2">
    <location>
        <begin position="1"/>
        <end position="20"/>
    </location>
</feature>
<feature type="compositionally biased region" description="Basic residues" evidence="2">
    <location>
        <begin position="1"/>
        <end position="12"/>
    </location>
</feature>
<feature type="binding site" evidence="1">
    <location>
        <position position="46"/>
    </location>
    <ligand>
        <name>Cu cation</name>
        <dbReference type="ChEBI" id="CHEBI:23378"/>
        <label>A</label>
    </ligand>
</feature>
<feature type="binding site" evidence="1">
    <location>
        <position position="66"/>
    </location>
    <ligand>
        <name>Cu cation</name>
        <dbReference type="ChEBI" id="CHEBI:23378"/>
        <label>A</label>
    </ligand>
</feature>
<feature type="binding site" evidence="1">
    <location>
        <position position="73"/>
    </location>
    <ligand>
        <name>Cu cation</name>
        <dbReference type="ChEBI" id="CHEBI:23378"/>
        <label>A</label>
    </ligand>
</feature>
<feature type="binding site" evidence="1">
    <location>
        <position position="185"/>
    </location>
    <ligand>
        <name>Cu cation</name>
        <dbReference type="ChEBI" id="CHEBI:23378"/>
        <label>B</label>
    </ligand>
</feature>
<feature type="binding site" evidence="1">
    <location>
        <position position="189"/>
    </location>
    <ligand>
        <name>Cu cation</name>
        <dbReference type="ChEBI" id="CHEBI:23378"/>
        <label>B</label>
    </ligand>
</feature>
<feature type="binding site" evidence="1">
    <location>
        <position position="216"/>
    </location>
    <ligand>
        <name>Cu cation</name>
        <dbReference type="ChEBI" id="CHEBI:23378"/>
        <label>B</label>
    </ligand>
</feature>
<feature type="disulfide bond" evidence="1">
    <location>
        <begin position="52"/>
        <end position="63"/>
    </location>
</feature>
<feature type="disulfide bond" evidence="1">
    <location>
        <begin position="175"/>
        <end position="242"/>
    </location>
</feature>
<feature type="disulfide bond" evidence="1">
    <location>
        <begin position="335"/>
        <end position="342"/>
    </location>
</feature>
<name>HC2C_MEGCR</name>
<protein>
    <recommendedName>
        <fullName>Hemocyanin 2-c chain</fullName>
    </recommendedName>
    <alternativeName>
        <fullName>KLH2-c</fullName>
    </alternativeName>
</protein>
<organism>
    <name type="scientific">Megathura crenulata</name>
    <name type="common">Giant keyhole limpet</name>
    <dbReference type="NCBI Taxonomy" id="55429"/>
    <lineage>
        <taxon>Eukaryota</taxon>
        <taxon>Metazoa</taxon>
        <taxon>Spiralia</taxon>
        <taxon>Lophotrochozoa</taxon>
        <taxon>Mollusca</taxon>
        <taxon>Gastropoda</taxon>
        <taxon>Vetigastropoda</taxon>
        <taxon>Lepetellida</taxon>
        <taxon>Fissurelloidea</taxon>
        <taxon>Fissurellidae</taxon>
        <taxon>Megathura</taxon>
    </lineage>
</organism>
<comment type="function">
    <text>Hemocyanins are copper-containing oxygen carriers occurring freely dissolved in the hemolymph of many mollusks and arthropods.</text>
</comment>
<comment type="subcellular location">
    <subcellularLocation>
        <location evidence="1">Secreted</location>
        <location evidence="1">Extracellular space</location>
    </subcellularLocation>
</comment>
<comment type="tissue specificity">
    <text>Hemolymph.</text>
</comment>
<comment type="PTM">
    <text>O-glycosylated.</text>
</comment>
<comment type="mass spectrometry"/>
<accession>P81732</accession>
<reference key="1">
    <citation type="journal article" date="1999" name="Biochim. Biophys. Acta">
        <title>Primary structure and unusual carbohydrate moiety of functional unit 2-c of keyhole limpet hemocyanin (KLH).</title>
        <authorList>
            <person name="Stoeva S."/>
            <person name="Schuetz J."/>
            <person name="Gebauer W."/>
            <person name="Hundsdoerfer T."/>
            <person name="Manz C."/>
            <person name="Markl J."/>
            <person name="Voelter W."/>
        </authorList>
    </citation>
    <scope>PROTEIN SEQUENCE</scope>
    <scope>MASS SPECTROMETRY</scope>
    <source>
        <tissue>Hemolymph</tissue>
    </source>
</reference>
<dbReference type="SMR" id="P81732"/>
<dbReference type="GO" id="GO:0005576">
    <property type="term" value="C:extracellular region"/>
    <property type="evidence" value="ECO:0007669"/>
    <property type="project" value="UniProtKB-SubCell"/>
</dbReference>
<dbReference type="GO" id="GO:0046872">
    <property type="term" value="F:metal ion binding"/>
    <property type="evidence" value="ECO:0007669"/>
    <property type="project" value="UniProtKB-KW"/>
</dbReference>
<dbReference type="GO" id="GO:0016491">
    <property type="term" value="F:oxidoreductase activity"/>
    <property type="evidence" value="ECO:0007669"/>
    <property type="project" value="InterPro"/>
</dbReference>
<dbReference type="GO" id="GO:0005344">
    <property type="term" value="F:oxygen carrier activity"/>
    <property type="evidence" value="ECO:0007669"/>
    <property type="project" value="UniProtKB-KW"/>
</dbReference>
<dbReference type="Gene3D" id="1.10.1280.10">
    <property type="entry name" value="Di-copper center containing domain from catechol oxidase"/>
    <property type="match status" value="1"/>
</dbReference>
<dbReference type="Gene3D" id="2.60.310.10">
    <property type="entry name" value="Haemocyanin C-terminal domain"/>
    <property type="match status" value="1"/>
</dbReference>
<dbReference type="InterPro" id="IPR008922">
    <property type="entry name" value="Di-copper_centre_dom_sf"/>
</dbReference>
<dbReference type="InterPro" id="IPR028999">
    <property type="entry name" value="Haemocyanin_beta-sandwich"/>
</dbReference>
<dbReference type="InterPro" id="IPR036848">
    <property type="entry name" value="Haemocyanin_C_sf"/>
</dbReference>
<dbReference type="InterPro" id="IPR050316">
    <property type="entry name" value="Tyrosinase/Hemocyanin"/>
</dbReference>
<dbReference type="InterPro" id="IPR002227">
    <property type="entry name" value="Tyrosinase_Cu-bd"/>
</dbReference>
<dbReference type="PANTHER" id="PTHR11474">
    <property type="entry name" value="TYROSINASE FAMILY MEMBER"/>
    <property type="match status" value="1"/>
</dbReference>
<dbReference type="Pfam" id="PF14830">
    <property type="entry name" value="Haemocyan_bet_s"/>
    <property type="match status" value="1"/>
</dbReference>
<dbReference type="Pfam" id="PF00264">
    <property type="entry name" value="Tyrosinase"/>
    <property type="match status" value="1"/>
</dbReference>
<dbReference type="PRINTS" id="PR00092">
    <property type="entry name" value="TYROSINASE"/>
</dbReference>
<dbReference type="SUPFAM" id="SSF81277">
    <property type="entry name" value="C-terminal domain of mollusc hemocyanin"/>
    <property type="match status" value="1"/>
</dbReference>
<dbReference type="SUPFAM" id="SSF48056">
    <property type="entry name" value="Di-copper centre-containing domain"/>
    <property type="match status" value="1"/>
</dbReference>
<dbReference type="PROSITE" id="PS00497">
    <property type="entry name" value="TYROSINASE_1"/>
    <property type="match status" value="1"/>
</dbReference>
<dbReference type="PROSITE" id="PS00498">
    <property type="entry name" value="TYROSINASE_2"/>
    <property type="match status" value="1"/>
</dbReference>